<proteinExistence type="inferred from homology"/>
<feature type="initiator methionine" description="Removed" evidence="1">
    <location>
        <position position="1"/>
    </location>
</feature>
<feature type="chain" id="PRO_0000129990" description="Small ribosomal subunit protein uS19c">
    <location>
        <begin position="2"/>
        <end position="93"/>
    </location>
</feature>
<name>RR19_SECCE</name>
<protein>
    <recommendedName>
        <fullName evidence="2">Small ribosomal subunit protein uS19c</fullName>
    </recommendedName>
    <alternativeName>
        <fullName>30S ribosomal protein S19, chloroplastic</fullName>
    </alternativeName>
</protein>
<evidence type="ECO:0000250" key="1"/>
<evidence type="ECO:0000305" key="2"/>
<dbReference type="EMBL" id="X13327">
    <property type="protein sequence ID" value="CAA31702.1"/>
    <property type="molecule type" value="Genomic_DNA"/>
</dbReference>
<dbReference type="PIR" id="JN0301">
    <property type="entry name" value="JN0301"/>
</dbReference>
<dbReference type="SMR" id="P33954"/>
<dbReference type="GO" id="GO:0009507">
    <property type="term" value="C:chloroplast"/>
    <property type="evidence" value="ECO:0007669"/>
    <property type="project" value="UniProtKB-SubCell"/>
</dbReference>
<dbReference type="GO" id="GO:0005763">
    <property type="term" value="C:mitochondrial small ribosomal subunit"/>
    <property type="evidence" value="ECO:0007669"/>
    <property type="project" value="TreeGrafter"/>
</dbReference>
<dbReference type="GO" id="GO:0019843">
    <property type="term" value="F:rRNA binding"/>
    <property type="evidence" value="ECO:0007669"/>
    <property type="project" value="UniProtKB-UniRule"/>
</dbReference>
<dbReference type="GO" id="GO:0003735">
    <property type="term" value="F:structural constituent of ribosome"/>
    <property type="evidence" value="ECO:0007669"/>
    <property type="project" value="InterPro"/>
</dbReference>
<dbReference type="GO" id="GO:0000028">
    <property type="term" value="P:ribosomal small subunit assembly"/>
    <property type="evidence" value="ECO:0007669"/>
    <property type="project" value="TreeGrafter"/>
</dbReference>
<dbReference type="GO" id="GO:0006412">
    <property type="term" value="P:translation"/>
    <property type="evidence" value="ECO:0007669"/>
    <property type="project" value="UniProtKB-UniRule"/>
</dbReference>
<dbReference type="FunFam" id="3.30.860.10:FF:000001">
    <property type="entry name" value="30S ribosomal protein S19"/>
    <property type="match status" value="1"/>
</dbReference>
<dbReference type="Gene3D" id="3.30.860.10">
    <property type="entry name" value="30s Ribosomal Protein S19, Chain A"/>
    <property type="match status" value="1"/>
</dbReference>
<dbReference type="HAMAP" id="MF_00531">
    <property type="entry name" value="Ribosomal_uS19"/>
    <property type="match status" value="1"/>
</dbReference>
<dbReference type="InterPro" id="IPR002222">
    <property type="entry name" value="Ribosomal_uS19"/>
</dbReference>
<dbReference type="InterPro" id="IPR005732">
    <property type="entry name" value="Ribosomal_uS19_bac-type"/>
</dbReference>
<dbReference type="InterPro" id="IPR020934">
    <property type="entry name" value="Ribosomal_uS19_CS"/>
</dbReference>
<dbReference type="InterPro" id="IPR023575">
    <property type="entry name" value="Ribosomal_uS19_SF"/>
</dbReference>
<dbReference type="NCBIfam" id="TIGR01050">
    <property type="entry name" value="rpsS_bact"/>
    <property type="match status" value="1"/>
</dbReference>
<dbReference type="PANTHER" id="PTHR11880">
    <property type="entry name" value="RIBOSOMAL PROTEIN S19P FAMILY MEMBER"/>
    <property type="match status" value="1"/>
</dbReference>
<dbReference type="PANTHER" id="PTHR11880:SF8">
    <property type="entry name" value="SMALL RIBOSOMAL SUBUNIT PROTEIN US19M"/>
    <property type="match status" value="1"/>
</dbReference>
<dbReference type="Pfam" id="PF00203">
    <property type="entry name" value="Ribosomal_S19"/>
    <property type="match status" value="1"/>
</dbReference>
<dbReference type="PIRSF" id="PIRSF002144">
    <property type="entry name" value="Ribosomal_S19"/>
    <property type="match status" value="1"/>
</dbReference>
<dbReference type="PRINTS" id="PR00975">
    <property type="entry name" value="RIBOSOMALS19"/>
</dbReference>
<dbReference type="SUPFAM" id="SSF54570">
    <property type="entry name" value="Ribosomal protein S19"/>
    <property type="match status" value="1"/>
</dbReference>
<dbReference type="PROSITE" id="PS00323">
    <property type="entry name" value="RIBOSOMAL_S19"/>
    <property type="match status" value="1"/>
</dbReference>
<reference key="1">
    <citation type="journal article" date="1990" name="Bioorg. Khim.">
        <title>Photosystem II of rye. Cloning and determination of the nucleotide sequence of chloroplast DNA fragments, comprising the psbA gene coding for D1 proteins.</title>
        <authorList>
            <person name="Kolosov V.L."/>
            <person name="Zolotarev A.S."/>
        </authorList>
    </citation>
    <scope>NUCLEOTIDE SEQUENCE [GENOMIC DNA]</scope>
</reference>
<keyword id="KW-0150">Chloroplast</keyword>
<keyword id="KW-0934">Plastid</keyword>
<keyword id="KW-0687">Ribonucleoprotein</keyword>
<keyword id="KW-0689">Ribosomal protein</keyword>
<keyword id="KW-0694">RNA-binding</keyword>
<keyword id="KW-0699">rRNA-binding</keyword>
<gene>
    <name type="primary">rps19</name>
</gene>
<accession>P33954</accession>
<comment type="function">
    <text evidence="1">Protein S19 forms a complex with S13 that binds strongly to the 16S ribosomal RNA.</text>
</comment>
<comment type="subcellular location">
    <subcellularLocation>
        <location>Plastid</location>
        <location>Chloroplast</location>
    </subcellularLocation>
</comment>
<comment type="similarity">
    <text evidence="2">Belongs to the universal ribosomal protein uS19 family.</text>
</comment>
<organism>
    <name type="scientific">Secale cereale</name>
    <name type="common">Rye</name>
    <dbReference type="NCBI Taxonomy" id="4550"/>
    <lineage>
        <taxon>Eukaryota</taxon>
        <taxon>Viridiplantae</taxon>
        <taxon>Streptophyta</taxon>
        <taxon>Embryophyta</taxon>
        <taxon>Tracheophyta</taxon>
        <taxon>Spermatophyta</taxon>
        <taxon>Magnoliopsida</taxon>
        <taxon>Liliopsida</taxon>
        <taxon>Poales</taxon>
        <taxon>Poaceae</taxon>
        <taxon>BOP clade</taxon>
        <taxon>Pooideae</taxon>
        <taxon>Triticodae</taxon>
        <taxon>Triticeae</taxon>
        <taxon>Hordeinae</taxon>
        <taxon>Secale</taxon>
    </lineage>
</organism>
<sequence>MTRKKTNPFVAHHLLAKIEKVNMKEEKETIVTWSRASSILPTMVGHTIAIHNGKEHIPIYITNPMVGRKLGEFVPTRHFTSYENARKDTKSRR</sequence>
<geneLocation type="chloroplast"/>